<accession>A6WX28</accession>
<feature type="chain" id="PRO_1000018365" description="Tryptophan synthase beta chain">
    <location>
        <begin position="1"/>
        <end position="406"/>
    </location>
</feature>
<feature type="modified residue" description="N6-(pyridoxal phosphate)lysine" evidence="1">
    <location>
        <position position="99"/>
    </location>
</feature>
<protein>
    <recommendedName>
        <fullName evidence="1">Tryptophan synthase beta chain</fullName>
        <ecNumber evidence="1">4.2.1.20</ecNumber>
    </recommendedName>
</protein>
<organism>
    <name type="scientific">Brucella anthropi (strain ATCC 49188 / DSM 6882 / CCUG 24695 / JCM 21032 / LMG 3331 / NBRC 15819 / NCTC 12168 / Alc 37)</name>
    <name type="common">Ochrobactrum anthropi</name>
    <dbReference type="NCBI Taxonomy" id="439375"/>
    <lineage>
        <taxon>Bacteria</taxon>
        <taxon>Pseudomonadati</taxon>
        <taxon>Pseudomonadota</taxon>
        <taxon>Alphaproteobacteria</taxon>
        <taxon>Hyphomicrobiales</taxon>
        <taxon>Brucellaceae</taxon>
        <taxon>Brucella/Ochrobactrum group</taxon>
        <taxon>Brucella</taxon>
    </lineage>
</organism>
<gene>
    <name evidence="1" type="primary">trpB</name>
    <name type="ordered locus">Oant_0810</name>
</gene>
<keyword id="KW-0028">Amino-acid biosynthesis</keyword>
<keyword id="KW-0057">Aromatic amino acid biosynthesis</keyword>
<keyword id="KW-0456">Lyase</keyword>
<keyword id="KW-0663">Pyridoxal phosphate</keyword>
<keyword id="KW-1185">Reference proteome</keyword>
<keyword id="KW-0822">Tryptophan biosynthesis</keyword>
<name>TRPB_BRUA4</name>
<comment type="function">
    <text evidence="1">The beta subunit is responsible for the synthesis of L-tryptophan from indole and L-serine.</text>
</comment>
<comment type="catalytic activity">
    <reaction evidence="1">
        <text>(1S,2R)-1-C-(indol-3-yl)glycerol 3-phosphate + L-serine = D-glyceraldehyde 3-phosphate + L-tryptophan + H2O</text>
        <dbReference type="Rhea" id="RHEA:10532"/>
        <dbReference type="ChEBI" id="CHEBI:15377"/>
        <dbReference type="ChEBI" id="CHEBI:33384"/>
        <dbReference type="ChEBI" id="CHEBI:57912"/>
        <dbReference type="ChEBI" id="CHEBI:58866"/>
        <dbReference type="ChEBI" id="CHEBI:59776"/>
        <dbReference type="EC" id="4.2.1.20"/>
    </reaction>
</comment>
<comment type="cofactor">
    <cofactor evidence="1">
        <name>pyridoxal 5'-phosphate</name>
        <dbReference type="ChEBI" id="CHEBI:597326"/>
    </cofactor>
</comment>
<comment type="pathway">
    <text evidence="1">Amino-acid biosynthesis; L-tryptophan biosynthesis; L-tryptophan from chorismate: step 5/5.</text>
</comment>
<comment type="subunit">
    <text evidence="1">Tetramer of two alpha and two beta chains.</text>
</comment>
<comment type="similarity">
    <text evidence="1">Belongs to the TrpB family.</text>
</comment>
<evidence type="ECO:0000255" key="1">
    <source>
        <dbReference type="HAMAP-Rule" id="MF_00133"/>
    </source>
</evidence>
<dbReference type="EC" id="4.2.1.20" evidence="1"/>
<dbReference type="EMBL" id="CP000758">
    <property type="protein sequence ID" value="ABS13532.1"/>
    <property type="molecule type" value="Genomic_DNA"/>
</dbReference>
<dbReference type="RefSeq" id="WP_010657692.1">
    <property type="nucleotide sequence ID" value="NC_009667.1"/>
</dbReference>
<dbReference type="SMR" id="A6WX28"/>
<dbReference type="STRING" id="439375.Oant_0810"/>
<dbReference type="GeneID" id="61318743"/>
<dbReference type="KEGG" id="oan:Oant_0810"/>
<dbReference type="eggNOG" id="COG0133">
    <property type="taxonomic scope" value="Bacteria"/>
</dbReference>
<dbReference type="HOGENOM" id="CLU_016734_3_1_5"/>
<dbReference type="PhylomeDB" id="A6WX28"/>
<dbReference type="UniPathway" id="UPA00035">
    <property type="reaction ID" value="UER00044"/>
</dbReference>
<dbReference type="Proteomes" id="UP000002301">
    <property type="component" value="Chromosome 1"/>
</dbReference>
<dbReference type="GO" id="GO:0005737">
    <property type="term" value="C:cytoplasm"/>
    <property type="evidence" value="ECO:0007669"/>
    <property type="project" value="TreeGrafter"/>
</dbReference>
<dbReference type="GO" id="GO:0004834">
    <property type="term" value="F:tryptophan synthase activity"/>
    <property type="evidence" value="ECO:0007669"/>
    <property type="project" value="UniProtKB-UniRule"/>
</dbReference>
<dbReference type="CDD" id="cd06446">
    <property type="entry name" value="Trp-synth_B"/>
    <property type="match status" value="1"/>
</dbReference>
<dbReference type="FunFam" id="3.40.50.1100:FF:000001">
    <property type="entry name" value="Tryptophan synthase beta chain"/>
    <property type="match status" value="1"/>
</dbReference>
<dbReference type="FunFam" id="3.40.50.1100:FF:000004">
    <property type="entry name" value="Tryptophan synthase beta chain"/>
    <property type="match status" value="1"/>
</dbReference>
<dbReference type="Gene3D" id="3.40.50.1100">
    <property type="match status" value="2"/>
</dbReference>
<dbReference type="HAMAP" id="MF_00133">
    <property type="entry name" value="Trp_synth_beta"/>
    <property type="match status" value="1"/>
</dbReference>
<dbReference type="InterPro" id="IPR006653">
    <property type="entry name" value="Trp_synth_b_CS"/>
</dbReference>
<dbReference type="InterPro" id="IPR006654">
    <property type="entry name" value="Trp_synth_beta"/>
</dbReference>
<dbReference type="InterPro" id="IPR023026">
    <property type="entry name" value="Trp_synth_beta/beta-like"/>
</dbReference>
<dbReference type="InterPro" id="IPR001926">
    <property type="entry name" value="TrpB-like_PALP"/>
</dbReference>
<dbReference type="InterPro" id="IPR036052">
    <property type="entry name" value="TrpB-like_PALP_sf"/>
</dbReference>
<dbReference type="NCBIfam" id="TIGR00263">
    <property type="entry name" value="trpB"/>
    <property type="match status" value="1"/>
</dbReference>
<dbReference type="PANTHER" id="PTHR48077:SF3">
    <property type="entry name" value="TRYPTOPHAN SYNTHASE"/>
    <property type="match status" value="1"/>
</dbReference>
<dbReference type="PANTHER" id="PTHR48077">
    <property type="entry name" value="TRYPTOPHAN SYNTHASE-RELATED"/>
    <property type="match status" value="1"/>
</dbReference>
<dbReference type="Pfam" id="PF00291">
    <property type="entry name" value="PALP"/>
    <property type="match status" value="1"/>
</dbReference>
<dbReference type="PIRSF" id="PIRSF001413">
    <property type="entry name" value="Trp_syn_beta"/>
    <property type="match status" value="1"/>
</dbReference>
<dbReference type="SUPFAM" id="SSF53686">
    <property type="entry name" value="Tryptophan synthase beta subunit-like PLP-dependent enzymes"/>
    <property type="match status" value="1"/>
</dbReference>
<dbReference type="PROSITE" id="PS00168">
    <property type="entry name" value="TRP_SYNTHASE_BETA"/>
    <property type="match status" value="1"/>
</dbReference>
<reference key="1">
    <citation type="journal article" date="2011" name="J. Bacteriol.">
        <title>Genome of Ochrobactrum anthropi ATCC 49188 T, a versatile opportunistic pathogen and symbiont of several eukaryotic hosts.</title>
        <authorList>
            <person name="Chain P.S."/>
            <person name="Lang D.M."/>
            <person name="Comerci D.J."/>
            <person name="Malfatti S.A."/>
            <person name="Vergez L.M."/>
            <person name="Shin M."/>
            <person name="Ugalde R.A."/>
            <person name="Garcia E."/>
            <person name="Tolmasky M.E."/>
        </authorList>
    </citation>
    <scope>NUCLEOTIDE SEQUENCE [LARGE SCALE GENOMIC DNA]</scope>
    <source>
        <strain>ATCC 49188 / DSM 6882 / CCUG 24695 / JCM 21032 / LMG 3331 / NBRC 15819 / NCTC 12168 / Alc 37</strain>
    </source>
</reference>
<sequence length="406" mass="43617">MNKPVAPNSYKTGPDEEGMFGIFGGRFVAETLMPLILELQEAYETAKNDPEFKAELNALSTYYAGRPSKLYYAEGLTKHLGGAKIYFKREDLNHTGSHKINNCLGQILLAKRMGKTRIIAETGAGQHGVASATVAARFGLPCVVYMGATDVERQKPNVFRMKLLGAEVIPVSAGNGTLKDAMNEALRDWVTNVEDTYYLIGTAAGPHPYPELVRDFQSVIGNEARQQILEQEGRLPDVIVAAVGGGSNAIGLFHPFLDDASVKIVGVEAGGRGLDGEEHCASMSAGRPGVLHGNRTYLLQNDDGQILEGHSVSAGLDYPGVGPEHSWLKDSGRVDYVPILDDEALDAFQLCTRTEGIIPALESAHAIAQAVKMAPTMGKDQVMIVNLSGRGDKDVHTVGKLLGMDI</sequence>
<proteinExistence type="inferred from homology"/>